<feature type="chain" id="PRO_0000102359" description="Lipoyl synthase">
    <location>
        <begin position="1"/>
        <end position="305"/>
    </location>
</feature>
<feature type="domain" description="Radical SAM core" evidence="2">
    <location>
        <begin position="54"/>
        <end position="270"/>
    </location>
</feature>
<feature type="region of interest" description="Disordered" evidence="3">
    <location>
        <begin position="283"/>
        <end position="305"/>
    </location>
</feature>
<feature type="compositionally biased region" description="Basic and acidic residues" evidence="3">
    <location>
        <begin position="283"/>
        <end position="298"/>
    </location>
</feature>
<feature type="binding site" evidence="1">
    <location>
        <position position="41"/>
    </location>
    <ligand>
        <name>[4Fe-4S] cluster</name>
        <dbReference type="ChEBI" id="CHEBI:49883"/>
        <label>1</label>
    </ligand>
</feature>
<feature type="binding site" evidence="1">
    <location>
        <position position="46"/>
    </location>
    <ligand>
        <name>[4Fe-4S] cluster</name>
        <dbReference type="ChEBI" id="CHEBI:49883"/>
        <label>1</label>
    </ligand>
</feature>
<feature type="binding site" evidence="1">
    <location>
        <position position="52"/>
    </location>
    <ligand>
        <name>[4Fe-4S] cluster</name>
        <dbReference type="ChEBI" id="CHEBI:49883"/>
        <label>1</label>
    </ligand>
</feature>
<feature type="binding site" evidence="1">
    <location>
        <position position="68"/>
    </location>
    <ligand>
        <name>[4Fe-4S] cluster</name>
        <dbReference type="ChEBI" id="CHEBI:49883"/>
        <label>2</label>
        <note>4Fe-4S-S-AdoMet</note>
    </ligand>
</feature>
<feature type="binding site" evidence="1">
    <location>
        <position position="72"/>
    </location>
    <ligand>
        <name>[4Fe-4S] cluster</name>
        <dbReference type="ChEBI" id="CHEBI:49883"/>
        <label>2</label>
        <note>4Fe-4S-S-AdoMet</note>
    </ligand>
</feature>
<feature type="binding site" evidence="1">
    <location>
        <position position="75"/>
    </location>
    <ligand>
        <name>[4Fe-4S] cluster</name>
        <dbReference type="ChEBI" id="CHEBI:49883"/>
        <label>2</label>
        <note>4Fe-4S-S-AdoMet</note>
    </ligand>
</feature>
<feature type="binding site" evidence="1">
    <location>
        <position position="281"/>
    </location>
    <ligand>
        <name>[4Fe-4S] cluster</name>
        <dbReference type="ChEBI" id="CHEBI:49883"/>
        <label>1</label>
    </ligand>
</feature>
<dbReference type="EC" id="2.8.1.8" evidence="1"/>
<dbReference type="EMBL" id="BA000018">
    <property type="protein sequence ID" value="BAB42024.1"/>
    <property type="molecule type" value="Genomic_DNA"/>
</dbReference>
<dbReference type="PIR" id="E89858">
    <property type="entry name" value="E89858"/>
</dbReference>
<dbReference type="RefSeq" id="WP_000201875.1">
    <property type="nucleotide sequence ID" value="NC_002745.2"/>
</dbReference>
<dbReference type="SMR" id="P65286"/>
<dbReference type="EnsemblBacteria" id="BAB42024">
    <property type="protein sequence ID" value="BAB42024"/>
    <property type="gene ID" value="BAB42024"/>
</dbReference>
<dbReference type="GeneID" id="98345243"/>
<dbReference type="KEGG" id="sau:SA0785"/>
<dbReference type="HOGENOM" id="CLU_033144_2_1_9"/>
<dbReference type="GO" id="GO:0005737">
    <property type="term" value="C:cytoplasm"/>
    <property type="evidence" value="ECO:0007669"/>
    <property type="project" value="UniProtKB-SubCell"/>
</dbReference>
<dbReference type="GO" id="GO:0051539">
    <property type="term" value="F:4 iron, 4 sulfur cluster binding"/>
    <property type="evidence" value="ECO:0007669"/>
    <property type="project" value="UniProtKB-UniRule"/>
</dbReference>
<dbReference type="GO" id="GO:0016992">
    <property type="term" value="F:lipoate synthase activity"/>
    <property type="evidence" value="ECO:0007669"/>
    <property type="project" value="UniProtKB-UniRule"/>
</dbReference>
<dbReference type="GO" id="GO:0046872">
    <property type="term" value="F:metal ion binding"/>
    <property type="evidence" value="ECO:0007669"/>
    <property type="project" value="UniProtKB-KW"/>
</dbReference>
<dbReference type="CDD" id="cd01335">
    <property type="entry name" value="Radical_SAM"/>
    <property type="match status" value="1"/>
</dbReference>
<dbReference type="FunFam" id="3.20.20.70:FF:000040">
    <property type="entry name" value="Lipoyl synthase"/>
    <property type="match status" value="1"/>
</dbReference>
<dbReference type="Gene3D" id="3.20.20.70">
    <property type="entry name" value="Aldolase class I"/>
    <property type="match status" value="1"/>
</dbReference>
<dbReference type="HAMAP" id="MF_00206">
    <property type="entry name" value="Lipoyl_synth"/>
    <property type="match status" value="1"/>
</dbReference>
<dbReference type="InterPro" id="IPR013785">
    <property type="entry name" value="Aldolase_TIM"/>
</dbReference>
<dbReference type="InterPro" id="IPR006638">
    <property type="entry name" value="Elp3/MiaA/NifB-like_rSAM"/>
</dbReference>
<dbReference type="InterPro" id="IPR031691">
    <property type="entry name" value="LIAS_N"/>
</dbReference>
<dbReference type="InterPro" id="IPR003698">
    <property type="entry name" value="Lipoyl_synth"/>
</dbReference>
<dbReference type="InterPro" id="IPR007197">
    <property type="entry name" value="rSAM"/>
</dbReference>
<dbReference type="NCBIfam" id="TIGR00510">
    <property type="entry name" value="lipA"/>
    <property type="match status" value="1"/>
</dbReference>
<dbReference type="NCBIfam" id="NF004019">
    <property type="entry name" value="PRK05481.1"/>
    <property type="match status" value="1"/>
</dbReference>
<dbReference type="NCBIfam" id="NF009544">
    <property type="entry name" value="PRK12928.1"/>
    <property type="match status" value="1"/>
</dbReference>
<dbReference type="PANTHER" id="PTHR10949">
    <property type="entry name" value="LIPOYL SYNTHASE"/>
    <property type="match status" value="1"/>
</dbReference>
<dbReference type="PANTHER" id="PTHR10949:SF0">
    <property type="entry name" value="LIPOYL SYNTHASE, MITOCHONDRIAL"/>
    <property type="match status" value="1"/>
</dbReference>
<dbReference type="Pfam" id="PF16881">
    <property type="entry name" value="LIAS_N"/>
    <property type="match status" value="1"/>
</dbReference>
<dbReference type="Pfam" id="PF04055">
    <property type="entry name" value="Radical_SAM"/>
    <property type="match status" value="1"/>
</dbReference>
<dbReference type="PIRSF" id="PIRSF005963">
    <property type="entry name" value="Lipoyl_synth"/>
    <property type="match status" value="1"/>
</dbReference>
<dbReference type="SFLD" id="SFLDF00271">
    <property type="entry name" value="lipoyl_synthase"/>
    <property type="match status" value="1"/>
</dbReference>
<dbReference type="SFLD" id="SFLDS00029">
    <property type="entry name" value="Radical_SAM"/>
    <property type="match status" value="1"/>
</dbReference>
<dbReference type="SMART" id="SM00729">
    <property type="entry name" value="Elp3"/>
    <property type="match status" value="1"/>
</dbReference>
<dbReference type="SUPFAM" id="SSF102114">
    <property type="entry name" value="Radical SAM enzymes"/>
    <property type="match status" value="1"/>
</dbReference>
<dbReference type="PROSITE" id="PS51918">
    <property type="entry name" value="RADICAL_SAM"/>
    <property type="match status" value="1"/>
</dbReference>
<comment type="function">
    <text evidence="1">Catalyzes the radical-mediated insertion of two sulfur atoms into the C-6 and C-8 positions of the octanoyl moiety bound to the lipoyl domains of lipoate-dependent enzymes, thereby converting the octanoylated domains into lipoylated derivatives.</text>
</comment>
<comment type="catalytic activity">
    <reaction evidence="1">
        <text>[[Fe-S] cluster scaffold protein carrying a second [4Fe-4S](2+) cluster] + N(6)-octanoyl-L-lysyl-[protein] + 2 oxidized [2Fe-2S]-[ferredoxin] + 2 S-adenosyl-L-methionine + 4 H(+) = [[Fe-S] cluster scaffold protein] + N(6)-[(R)-dihydrolipoyl]-L-lysyl-[protein] + 4 Fe(3+) + 2 hydrogen sulfide + 2 5'-deoxyadenosine + 2 L-methionine + 2 reduced [2Fe-2S]-[ferredoxin]</text>
        <dbReference type="Rhea" id="RHEA:16585"/>
        <dbReference type="Rhea" id="RHEA-COMP:9928"/>
        <dbReference type="Rhea" id="RHEA-COMP:10000"/>
        <dbReference type="Rhea" id="RHEA-COMP:10001"/>
        <dbReference type="Rhea" id="RHEA-COMP:10475"/>
        <dbReference type="Rhea" id="RHEA-COMP:14568"/>
        <dbReference type="Rhea" id="RHEA-COMP:14569"/>
        <dbReference type="ChEBI" id="CHEBI:15378"/>
        <dbReference type="ChEBI" id="CHEBI:17319"/>
        <dbReference type="ChEBI" id="CHEBI:29034"/>
        <dbReference type="ChEBI" id="CHEBI:29919"/>
        <dbReference type="ChEBI" id="CHEBI:33722"/>
        <dbReference type="ChEBI" id="CHEBI:33737"/>
        <dbReference type="ChEBI" id="CHEBI:33738"/>
        <dbReference type="ChEBI" id="CHEBI:57844"/>
        <dbReference type="ChEBI" id="CHEBI:59789"/>
        <dbReference type="ChEBI" id="CHEBI:78809"/>
        <dbReference type="ChEBI" id="CHEBI:83100"/>
        <dbReference type="EC" id="2.8.1.8"/>
    </reaction>
</comment>
<comment type="cofactor">
    <cofactor evidence="1">
        <name>[4Fe-4S] cluster</name>
        <dbReference type="ChEBI" id="CHEBI:49883"/>
    </cofactor>
    <text evidence="1">Binds 2 [4Fe-4S] clusters per subunit. One cluster is coordinated with 3 cysteines and an exchangeable S-adenosyl-L-methionine.</text>
</comment>
<comment type="pathway">
    <text evidence="1">Protein modification; protein lipoylation via endogenous pathway; protein N(6)-(lipoyl)lysine from octanoyl-[acyl-carrier-protein].</text>
</comment>
<comment type="subcellular location">
    <subcellularLocation>
        <location evidence="1">Cytoplasm</location>
    </subcellularLocation>
</comment>
<comment type="similarity">
    <text evidence="1">Belongs to the radical SAM superfamily. Lipoyl synthase family.</text>
</comment>
<accession>P65286</accession>
<accession>Q99VF2</accession>
<sequence length="305" mass="34885">MATKNEEILRKPDWLKIKLNTNENYTGLKKMMREKNLNTVCEEAKCPNIHECWGARRTATFMILGAVCTRACRFCAVKTGLPNELDLNEPERVAESVELMNLKHVVITAVARDDLRDAGSNVYAETVRKVRERNPFTTIEILPSDMGGDYDALETLMASRPDILNHNIETVRRLTPRVRARATYDRTLEFLRRSKELQPDIPTKSSIMVGLGETIEEIYETMDDLRANDVDILTIGQYLQPSRKHLKVQKYYTPLEFGKLRKVAMDKGFKHCQAGPLVRSSYHADEQVNEAAKEKQRQGEAQLNS</sequence>
<name>LIPA_STAAN</name>
<keyword id="KW-0004">4Fe-4S</keyword>
<keyword id="KW-0963">Cytoplasm</keyword>
<keyword id="KW-0408">Iron</keyword>
<keyword id="KW-0411">Iron-sulfur</keyword>
<keyword id="KW-0479">Metal-binding</keyword>
<keyword id="KW-0949">S-adenosyl-L-methionine</keyword>
<keyword id="KW-0808">Transferase</keyword>
<gene>
    <name evidence="1" type="primary">lipA</name>
    <name type="ordered locus">SA0785</name>
</gene>
<organism>
    <name type="scientific">Staphylococcus aureus (strain N315)</name>
    <dbReference type="NCBI Taxonomy" id="158879"/>
    <lineage>
        <taxon>Bacteria</taxon>
        <taxon>Bacillati</taxon>
        <taxon>Bacillota</taxon>
        <taxon>Bacilli</taxon>
        <taxon>Bacillales</taxon>
        <taxon>Staphylococcaceae</taxon>
        <taxon>Staphylococcus</taxon>
    </lineage>
</organism>
<evidence type="ECO:0000255" key="1">
    <source>
        <dbReference type="HAMAP-Rule" id="MF_00206"/>
    </source>
</evidence>
<evidence type="ECO:0000255" key="2">
    <source>
        <dbReference type="PROSITE-ProRule" id="PRU01266"/>
    </source>
</evidence>
<evidence type="ECO:0000256" key="3">
    <source>
        <dbReference type="SAM" id="MobiDB-lite"/>
    </source>
</evidence>
<reference key="1">
    <citation type="journal article" date="2001" name="Lancet">
        <title>Whole genome sequencing of meticillin-resistant Staphylococcus aureus.</title>
        <authorList>
            <person name="Kuroda M."/>
            <person name="Ohta T."/>
            <person name="Uchiyama I."/>
            <person name="Baba T."/>
            <person name="Yuzawa H."/>
            <person name="Kobayashi I."/>
            <person name="Cui L."/>
            <person name="Oguchi A."/>
            <person name="Aoki K."/>
            <person name="Nagai Y."/>
            <person name="Lian J.-Q."/>
            <person name="Ito T."/>
            <person name="Kanamori M."/>
            <person name="Matsumaru H."/>
            <person name="Maruyama A."/>
            <person name="Murakami H."/>
            <person name="Hosoyama A."/>
            <person name="Mizutani-Ui Y."/>
            <person name="Takahashi N.K."/>
            <person name="Sawano T."/>
            <person name="Inoue R."/>
            <person name="Kaito C."/>
            <person name="Sekimizu K."/>
            <person name="Hirakawa H."/>
            <person name="Kuhara S."/>
            <person name="Goto S."/>
            <person name="Yabuzaki J."/>
            <person name="Kanehisa M."/>
            <person name="Yamashita A."/>
            <person name="Oshima K."/>
            <person name="Furuya K."/>
            <person name="Yoshino C."/>
            <person name="Shiba T."/>
            <person name="Hattori M."/>
            <person name="Ogasawara N."/>
            <person name="Hayashi H."/>
            <person name="Hiramatsu K."/>
        </authorList>
    </citation>
    <scope>NUCLEOTIDE SEQUENCE [LARGE SCALE GENOMIC DNA]</scope>
    <source>
        <strain>N315</strain>
    </source>
</reference>
<reference key="2">
    <citation type="submission" date="2007-10" db="UniProtKB">
        <title>Shotgun proteomic analysis of total and membrane protein extracts of S. aureus strain N315.</title>
        <authorList>
            <person name="Vaezzadeh A.R."/>
            <person name="Deshusses J."/>
            <person name="Lescuyer P."/>
            <person name="Hochstrasser D.F."/>
        </authorList>
    </citation>
    <scope>IDENTIFICATION BY MASS SPECTROMETRY [LARGE SCALE ANALYSIS]</scope>
    <source>
        <strain>N315</strain>
    </source>
</reference>
<protein>
    <recommendedName>
        <fullName evidence="1">Lipoyl synthase</fullName>
        <ecNumber evidence="1">2.8.1.8</ecNumber>
    </recommendedName>
    <alternativeName>
        <fullName evidence="1">Lip-syn</fullName>
        <shortName evidence="1">LS</shortName>
    </alternativeName>
    <alternativeName>
        <fullName evidence="1">Lipoate synthase</fullName>
    </alternativeName>
    <alternativeName>
        <fullName evidence="1">Lipoic acid synthase</fullName>
    </alternativeName>
    <alternativeName>
        <fullName evidence="1">Sulfur insertion protein LipA</fullName>
    </alternativeName>
</protein>
<proteinExistence type="evidence at protein level"/>